<protein>
    <recommendedName>
        <fullName evidence="1">Large ribosomal subunit protein bL35</fullName>
    </recommendedName>
    <alternativeName>
        <fullName evidence="2">50S ribosomal protein L35</fullName>
    </alternativeName>
</protein>
<sequence>MPKMKSHRGACKRFKVTGSGKVKREKMNASHILEKKSRKRKRNLHQSTLVDASQEKTVKRMILA</sequence>
<comment type="similarity">
    <text evidence="1">Belongs to the bacterial ribosomal protein bL35 family.</text>
</comment>
<feature type="chain" id="PRO_1000127325" description="Large ribosomal subunit protein bL35">
    <location>
        <begin position="1"/>
        <end position="64"/>
    </location>
</feature>
<gene>
    <name evidence="1" type="primary">rpmI</name>
    <name type="ordered locus">Ctha_1996</name>
</gene>
<proteinExistence type="inferred from homology"/>
<dbReference type="EMBL" id="CP001100">
    <property type="protein sequence ID" value="ACF14450.1"/>
    <property type="molecule type" value="Genomic_DNA"/>
</dbReference>
<dbReference type="RefSeq" id="WP_012500533.1">
    <property type="nucleotide sequence ID" value="NC_011026.1"/>
</dbReference>
<dbReference type="SMR" id="B3QUU9"/>
<dbReference type="STRING" id="517418.Ctha_1996"/>
<dbReference type="KEGG" id="cts:Ctha_1996"/>
<dbReference type="eggNOG" id="COG0291">
    <property type="taxonomic scope" value="Bacteria"/>
</dbReference>
<dbReference type="HOGENOM" id="CLU_169643_4_3_10"/>
<dbReference type="OrthoDB" id="47476at2"/>
<dbReference type="Proteomes" id="UP000001208">
    <property type="component" value="Chromosome"/>
</dbReference>
<dbReference type="GO" id="GO:0022625">
    <property type="term" value="C:cytosolic large ribosomal subunit"/>
    <property type="evidence" value="ECO:0007669"/>
    <property type="project" value="TreeGrafter"/>
</dbReference>
<dbReference type="GO" id="GO:0003735">
    <property type="term" value="F:structural constituent of ribosome"/>
    <property type="evidence" value="ECO:0007669"/>
    <property type="project" value="InterPro"/>
</dbReference>
<dbReference type="GO" id="GO:0006412">
    <property type="term" value="P:translation"/>
    <property type="evidence" value="ECO:0007669"/>
    <property type="project" value="UniProtKB-UniRule"/>
</dbReference>
<dbReference type="FunFam" id="4.10.410.60:FF:000001">
    <property type="entry name" value="50S ribosomal protein L35"/>
    <property type="match status" value="1"/>
</dbReference>
<dbReference type="Gene3D" id="4.10.410.60">
    <property type="match status" value="1"/>
</dbReference>
<dbReference type="HAMAP" id="MF_00514">
    <property type="entry name" value="Ribosomal_bL35"/>
    <property type="match status" value="1"/>
</dbReference>
<dbReference type="InterPro" id="IPR001706">
    <property type="entry name" value="Ribosomal_bL35"/>
</dbReference>
<dbReference type="InterPro" id="IPR021137">
    <property type="entry name" value="Ribosomal_bL35-like"/>
</dbReference>
<dbReference type="InterPro" id="IPR018265">
    <property type="entry name" value="Ribosomal_bL35_CS"/>
</dbReference>
<dbReference type="InterPro" id="IPR037229">
    <property type="entry name" value="Ribosomal_bL35_sf"/>
</dbReference>
<dbReference type="NCBIfam" id="TIGR00001">
    <property type="entry name" value="rpmI_bact"/>
    <property type="match status" value="1"/>
</dbReference>
<dbReference type="PANTHER" id="PTHR33343">
    <property type="entry name" value="54S RIBOSOMAL PROTEIN BL35M"/>
    <property type="match status" value="1"/>
</dbReference>
<dbReference type="PANTHER" id="PTHR33343:SF1">
    <property type="entry name" value="LARGE RIBOSOMAL SUBUNIT PROTEIN BL35M"/>
    <property type="match status" value="1"/>
</dbReference>
<dbReference type="Pfam" id="PF01632">
    <property type="entry name" value="Ribosomal_L35p"/>
    <property type="match status" value="1"/>
</dbReference>
<dbReference type="PRINTS" id="PR00064">
    <property type="entry name" value="RIBOSOMALL35"/>
</dbReference>
<dbReference type="SUPFAM" id="SSF143034">
    <property type="entry name" value="L35p-like"/>
    <property type="match status" value="1"/>
</dbReference>
<dbReference type="PROSITE" id="PS00936">
    <property type="entry name" value="RIBOSOMAL_L35"/>
    <property type="match status" value="1"/>
</dbReference>
<reference key="1">
    <citation type="submission" date="2008-06" db="EMBL/GenBank/DDBJ databases">
        <title>Complete sequence of Chloroherpeton thalassium ATCC 35110.</title>
        <authorList>
            <consortium name="US DOE Joint Genome Institute"/>
            <person name="Lucas S."/>
            <person name="Copeland A."/>
            <person name="Lapidus A."/>
            <person name="Glavina del Rio T."/>
            <person name="Dalin E."/>
            <person name="Tice H."/>
            <person name="Bruce D."/>
            <person name="Goodwin L."/>
            <person name="Pitluck S."/>
            <person name="Schmutz J."/>
            <person name="Larimer F."/>
            <person name="Land M."/>
            <person name="Hauser L."/>
            <person name="Kyrpides N."/>
            <person name="Mikhailova N."/>
            <person name="Liu Z."/>
            <person name="Li T."/>
            <person name="Zhao F."/>
            <person name="Overmann J."/>
            <person name="Bryant D.A."/>
            <person name="Richardson P."/>
        </authorList>
    </citation>
    <scope>NUCLEOTIDE SEQUENCE [LARGE SCALE GENOMIC DNA]</scope>
    <source>
        <strain>ATCC 35110 / GB-78</strain>
    </source>
</reference>
<accession>B3QUU9</accession>
<organism>
    <name type="scientific">Chloroherpeton thalassium (strain ATCC 35110 / GB-78)</name>
    <dbReference type="NCBI Taxonomy" id="517418"/>
    <lineage>
        <taxon>Bacteria</taxon>
        <taxon>Pseudomonadati</taxon>
        <taxon>Chlorobiota</taxon>
        <taxon>Chlorobiia</taxon>
        <taxon>Chlorobiales</taxon>
        <taxon>Chloroherpetonaceae</taxon>
        <taxon>Chloroherpeton</taxon>
    </lineage>
</organism>
<keyword id="KW-1185">Reference proteome</keyword>
<keyword id="KW-0687">Ribonucleoprotein</keyword>
<keyword id="KW-0689">Ribosomal protein</keyword>
<name>RL35_CHLT3</name>
<evidence type="ECO:0000255" key="1">
    <source>
        <dbReference type="HAMAP-Rule" id="MF_00514"/>
    </source>
</evidence>
<evidence type="ECO:0000305" key="2"/>